<feature type="chain" id="PRO_0000386981" description="Ribosomal RNA small subunit methyltransferase H">
    <location>
        <begin position="1"/>
        <end position="331"/>
    </location>
</feature>
<feature type="region of interest" description="Disordered" evidence="2">
    <location>
        <begin position="297"/>
        <end position="331"/>
    </location>
</feature>
<feature type="compositionally biased region" description="Basic and acidic residues" evidence="2">
    <location>
        <begin position="298"/>
        <end position="312"/>
    </location>
</feature>
<feature type="binding site" evidence="1">
    <location>
        <begin position="48"/>
        <end position="50"/>
    </location>
    <ligand>
        <name>S-adenosyl-L-methionine</name>
        <dbReference type="ChEBI" id="CHEBI:59789"/>
    </ligand>
</feature>
<feature type="binding site" evidence="1">
    <location>
        <position position="67"/>
    </location>
    <ligand>
        <name>S-adenosyl-L-methionine</name>
        <dbReference type="ChEBI" id="CHEBI:59789"/>
    </ligand>
</feature>
<feature type="binding site" evidence="1">
    <location>
        <position position="115"/>
    </location>
    <ligand>
        <name>S-adenosyl-L-methionine</name>
        <dbReference type="ChEBI" id="CHEBI:59789"/>
    </ligand>
</feature>
<feature type="binding site" evidence="1">
    <location>
        <position position="122"/>
    </location>
    <ligand>
        <name>S-adenosyl-L-methionine</name>
        <dbReference type="ChEBI" id="CHEBI:59789"/>
    </ligand>
</feature>
<evidence type="ECO:0000255" key="1">
    <source>
        <dbReference type="HAMAP-Rule" id="MF_01007"/>
    </source>
</evidence>
<evidence type="ECO:0000256" key="2">
    <source>
        <dbReference type="SAM" id="MobiDB-lite"/>
    </source>
</evidence>
<reference key="1">
    <citation type="journal article" date="2010" name="J. Bacteriol.">
        <title>Genome sequence of the Fleming strain of Micrococcus luteus, a simple free-living actinobacterium.</title>
        <authorList>
            <person name="Young M."/>
            <person name="Artsatbanov V."/>
            <person name="Beller H.R."/>
            <person name="Chandra G."/>
            <person name="Chater K.F."/>
            <person name="Dover L.G."/>
            <person name="Goh E.B."/>
            <person name="Kahan T."/>
            <person name="Kaprelyants A.S."/>
            <person name="Kyrpides N."/>
            <person name="Lapidus A."/>
            <person name="Lowry S.R."/>
            <person name="Lykidis A."/>
            <person name="Mahillon J."/>
            <person name="Markowitz V."/>
            <person name="Mavromatis K."/>
            <person name="Mukamolova G.V."/>
            <person name="Oren A."/>
            <person name="Rokem J.S."/>
            <person name="Smith M.C."/>
            <person name="Young D.I."/>
            <person name="Greenblatt C.L."/>
        </authorList>
    </citation>
    <scope>NUCLEOTIDE SEQUENCE [LARGE SCALE GENOMIC DNA]</scope>
    <source>
        <strain>ATCC 4698 / DSM 20030 / JCM 1464 / CCM 169 / CCUG 5858 / IAM 1056 / NBRC 3333 / NCIMB 9278 / NCTC 2665 / VKM Ac-2230</strain>
    </source>
</reference>
<organism>
    <name type="scientific">Micrococcus luteus (strain ATCC 4698 / DSM 20030 / JCM 1464 / CCM 169 / CCUG 5858 / IAM 1056 / NBRC 3333 / NCIMB 9278 / NCTC 2665 / VKM Ac-2230)</name>
    <name type="common">Micrococcus lysodeikticus</name>
    <dbReference type="NCBI Taxonomy" id="465515"/>
    <lineage>
        <taxon>Bacteria</taxon>
        <taxon>Bacillati</taxon>
        <taxon>Actinomycetota</taxon>
        <taxon>Actinomycetes</taxon>
        <taxon>Micrococcales</taxon>
        <taxon>Micrococcaceae</taxon>
        <taxon>Micrococcus</taxon>
    </lineage>
</organism>
<proteinExistence type="inferred from homology"/>
<protein>
    <recommendedName>
        <fullName evidence="1">Ribosomal RNA small subunit methyltransferase H</fullName>
        <ecNumber evidence="1">2.1.1.199</ecNumber>
    </recommendedName>
    <alternativeName>
        <fullName evidence="1">16S rRNA m(4)C1402 methyltransferase</fullName>
    </alternativeName>
    <alternativeName>
        <fullName evidence="1">rRNA (cytosine-N(4)-)-methyltransferase RsmH</fullName>
    </alternativeName>
</protein>
<gene>
    <name evidence="1" type="primary">rsmH</name>
    <name type="synonym">mraW</name>
    <name type="ordered locus">Mlut_13680</name>
</gene>
<name>RSMH_MICLC</name>
<sequence length="331" mass="36012">MDAGQPRPEDRHLPVMRDRVVDLLAPAVQAALEAGRTPVAVDGTLGMGGHTEALLTRFPHLRVIGIDRDAHAQAMAAERLGPLADRVIPFHGTYDRVPEAMAAAGVTKVDAALYDLGVSSYQLDDRERGFAYSYDAPLDMRMDDTAERSAATLVAELDEQELRRIIRRDGEERFAGPIARAIVRARAEAPIETTGRLVEVIRSAVPVAAGATGGHPAKRTFQALRIAVNEELDILDAAVPAILDALHVGGRLVVMSYHSLEDRITKRHLSAWATSTAPPGFPVVLEEHEPVVRVLTRGTEKPTEEEISENRRASSAKVRAVEKIRTSRTTA</sequence>
<dbReference type="EC" id="2.1.1.199" evidence="1"/>
<dbReference type="EMBL" id="CP001628">
    <property type="protein sequence ID" value="ACS30873.1"/>
    <property type="molecule type" value="Genomic_DNA"/>
</dbReference>
<dbReference type="RefSeq" id="WP_010078493.1">
    <property type="nucleotide sequence ID" value="NC_012803.1"/>
</dbReference>
<dbReference type="SMR" id="C5CA38"/>
<dbReference type="STRING" id="465515.Mlut_13680"/>
<dbReference type="EnsemblBacteria" id="ACS30873">
    <property type="protein sequence ID" value="ACS30873"/>
    <property type="gene ID" value="Mlut_13680"/>
</dbReference>
<dbReference type="GeneID" id="93343250"/>
<dbReference type="KEGG" id="mlu:Mlut_13680"/>
<dbReference type="PATRIC" id="fig|465515.4.peg.1310"/>
<dbReference type="eggNOG" id="COG0275">
    <property type="taxonomic scope" value="Bacteria"/>
</dbReference>
<dbReference type="HOGENOM" id="CLU_038422_0_0_11"/>
<dbReference type="Proteomes" id="UP000000738">
    <property type="component" value="Chromosome"/>
</dbReference>
<dbReference type="GO" id="GO:0005737">
    <property type="term" value="C:cytoplasm"/>
    <property type="evidence" value="ECO:0007669"/>
    <property type="project" value="UniProtKB-SubCell"/>
</dbReference>
<dbReference type="GO" id="GO:0071424">
    <property type="term" value="F:rRNA (cytosine-N4-)-methyltransferase activity"/>
    <property type="evidence" value="ECO:0007669"/>
    <property type="project" value="UniProtKB-UniRule"/>
</dbReference>
<dbReference type="GO" id="GO:0070475">
    <property type="term" value="P:rRNA base methylation"/>
    <property type="evidence" value="ECO:0007669"/>
    <property type="project" value="UniProtKB-UniRule"/>
</dbReference>
<dbReference type="Gene3D" id="1.10.150.170">
    <property type="entry name" value="Putative methyltransferase TM0872, insert domain"/>
    <property type="match status" value="1"/>
</dbReference>
<dbReference type="Gene3D" id="3.40.50.150">
    <property type="entry name" value="Vaccinia Virus protein VP39"/>
    <property type="match status" value="1"/>
</dbReference>
<dbReference type="HAMAP" id="MF_01007">
    <property type="entry name" value="16SrRNA_methyltr_H"/>
    <property type="match status" value="1"/>
</dbReference>
<dbReference type="InterPro" id="IPR002903">
    <property type="entry name" value="RsmH"/>
</dbReference>
<dbReference type="InterPro" id="IPR023397">
    <property type="entry name" value="SAM-dep_MeTrfase_MraW_recog"/>
</dbReference>
<dbReference type="InterPro" id="IPR029063">
    <property type="entry name" value="SAM-dependent_MTases_sf"/>
</dbReference>
<dbReference type="NCBIfam" id="TIGR00006">
    <property type="entry name" value="16S rRNA (cytosine(1402)-N(4))-methyltransferase RsmH"/>
    <property type="match status" value="1"/>
</dbReference>
<dbReference type="PANTHER" id="PTHR11265:SF0">
    <property type="entry name" value="12S RRNA N4-METHYLCYTIDINE METHYLTRANSFERASE"/>
    <property type="match status" value="1"/>
</dbReference>
<dbReference type="PANTHER" id="PTHR11265">
    <property type="entry name" value="S-ADENOSYL-METHYLTRANSFERASE MRAW"/>
    <property type="match status" value="1"/>
</dbReference>
<dbReference type="Pfam" id="PF01795">
    <property type="entry name" value="Methyltransf_5"/>
    <property type="match status" value="1"/>
</dbReference>
<dbReference type="PIRSF" id="PIRSF004486">
    <property type="entry name" value="MraW"/>
    <property type="match status" value="1"/>
</dbReference>
<dbReference type="SUPFAM" id="SSF81799">
    <property type="entry name" value="Putative methyltransferase TM0872, insert domain"/>
    <property type="match status" value="1"/>
</dbReference>
<dbReference type="SUPFAM" id="SSF53335">
    <property type="entry name" value="S-adenosyl-L-methionine-dependent methyltransferases"/>
    <property type="match status" value="1"/>
</dbReference>
<accession>C5CA38</accession>
<keyword id="KW-0963">Cytoplasm</keyword>
<keyword id="KW-0489">Methyltransferase</keyword>
<keyword id="KW-1185">Reference proteome</keyword>
<keyword id="KW-0698">rRNA processing</keyword>
<keyword id="KW-0949">S-adenosyl-L-methionine</keyword>
<keyword id="KW-0808">Transferase</keyword>
<comment type="function">
    <text evidence="1">Specifically methylates the N4 position of cytidine in position 1402 (C1402) of 16S rRNA.</text>
</comment>
<comment type="catalytic activity">
    <reaction evidence="1">
        <text>cytidine(1402) in 16S rRNA + S-adenosyl-L-methionine = N(4)-methylcytidine(1402) in 16S rRNA + S-adenosyl-L-homocysteine + H(+)</text>
        <dbReference type="Rhea" id="RHEA:42928"/>
        <dbReference type="Rhea" id="RHEA-COMP:10286"/>
        <dbReference type="Rhea" id="RHEA-COMP:10287"/>
        <dbReference type="ChEBI" id="CHEBI:15378"/>
        <dbReference type="ChEBI" id="CHEBI:57856"/>
        <dbReference type="ChEBI" id="CHEBI:59789"/>
        <dbReference type="ChEBI" id="CHEBI:74506"/>
        <dbReference type="ChEBI" id="CHEBI:82748"/>
        <dbReference type="EC" id="2.1.1.199"/>
    </reaction>
</comment>
<comment type="subcellular location">
    <subcellularLocation>
        <location evidence="1">Cytoplasm</location>
    </subcellularLocation>
</comment>
<comment type="similarity">
    <text evidence="1">Belongs to the methyltransferase superfamily. RsmH family.</text>
</comment>